<proteinExistence type="inferred from homology"/>
<comment type="function">
    <text evidence="1">Catalyzes the hydrolysis of UDP-3-O-myristoyl-N-acetylglucosamine to form UDP-3-O-myristoylglucosamine and acetate, the committed step in lipid A biosynthesis.</text>
</comment>
<comment type="catalytic activity">
    <reaction evidence="1">
        <text>a UDP-3-O-[(3R)-3-hydroxyacyl]-N-acetyl-alpha-D-glucosamine + H2O = a UDP-3-O-[(3R)-3-hydroxyacyl]-alpha-D-glucosamine + acetate</text>
        <dbReference type="Rhea" id="RHEA:67816"/>
        <dbReference type="ChEBI" id="CHEBI:15377"/>
        <dbReference type="ChEBI" id="CHEBI:30089"/>
        <dbReference type="ChEBI" id="CHEBI:137740"/>
        <dbReference type="ChEBI" id="CHEBI:173225"/>
        <dbReference type="EC" id="3.5.1.108"/>
    </reaction>
</comment>
<comment type="cofactor">
    <cofactor evidence="1">
        <name>Zn(2+)</name>
        <dbReference type="ChEBI" id="CHEBI:29105"/>
    </cofactor>
</comment>
<comment type="pathway">
    <text evidence="1">Glycolipid biosynthesis; lipid IV(A) biosynthesis; lipid IV(A) from (3R)-3-hydroxytetradecanoyl-[acyl-carrier-protein] and UDP-N-acetyl-alpha-D-glucosamine: step 2/6.</text>
</comment>
<comment type="similarity">
    <text evidence="1">Belongs to the LpxC family.</text>
</comment>
<reference key="1">
    <citation type="journal article" date="2001" name="Nature">
        <title>Complete genome sequence of a multiple drug resistant Salmonella enterica serovar Typhi CT18.</title>
        <authorList>
            <person name="Parkhill J."/>
            <person name="Dougan G."/>
            <person name="James K.D."/>
            <person name="Thomson N.R."/>
            <person name="Pickard D."/>
            <person name="Wain J."/>
            <person name="Churcher C.M."/>
            <person name="Mungall K.L."/>
            <person name="Bentley S.D."/>
            <person name="Holden M.T.G."/>
            <person name="Sebaihia M."/>
            <person name="Baker S."/>
            <person name="Basham D."/>
            <person name="Brooks K."/>
            <person name="Chillingworth T."/>
            <person name="Connerton P."/>
            <person name="Cronin A."/>
            <person name="Davis P."/>
            <person name="Davies R.M."/>
            <person name="Dowd L."/>
            <person name="White N."/>
            <person name="Farrar J."/>
            <person name="Feltwell T."/>
            <person name="Hamlin N."/>
            <person name="Haque A."/>
            <person name="Hien T.T."/>
            <person name="Holroyd S."/>
            <person name="Jagels K."/>
            <person name="Krogh A."/>
            <person name="Larsen T.S."/>
            <person name="Leather S."/>
            <person name="Moule S."/>
            <person name="O'Gaora P."/>
            <person name="Parry C."/>
            <person name="Quail M.A."/>
            <person name="Rutherford K.M."/>
            <person name="Simmonds M."/>
            <person name="Skelton J."/>
            <person name="Stevens K."/>
            <person name="Whitehead S."/>
            <person name="Barrell B.G."/>
        </authorList>
    </citation>
    <scope>NUCLEOTIDE SEQUENCE [LARGE SCALE GENOMIC DNA]</scope>
    <source>
        <strain>CT18</strain>
    </source>
</reference>
<reference key="2">
    <citation type="journal article" date="2003" name="J. Bacteriol.">
        <title>Comparative genomics of Salmonella enterica serovar Typhi strains Ty2 and CT18.</title>
        <authorList>
            <person name="Deng W."/>
            <person name="Liou S.-R."/>
            <person name="Plunkett G. III"/>
            <person name="Mayhew G.F."/>
            <person name="Rose D.J."/>
            <person name="Burland V."/>
            <person name="Kodoyianni V."/>
            <person name="Schwartz D.C."/>
            <person name="Blattner F.R."/>
        </authorList>
    </citation>
    <scope>NUCLEOTIDE SEQUENCE [LARGE SCALE GENOMIC DNA]</scope>
    <source>
        <strain>ATCC 700931 / Ty2</strain>
    </source>
</reference>
<name>LPXC_SALTI</name>
<gene>
    <name evidence="1" type="primary">lpxC</name>
    <name type="ordered locus">STY0154</name>
    <name type="ordered locus">t0138</name>
</gene>
<feature type="chain" id="PRO_0000191954" description="UDP-3-O-acyl-N-acetylglucosamine deacetylase">
    <location>
        <begin position="1"/>
        <end position="305"/>
    </location>
</feature>
<feature type="active site" description="Proton donor" evidence="1">
    <location>
        <position position="265"/>
    </location>
</feature>
<feature type="binding site" evidence="1">
    <location>
        <position position="79"/>
    </location>
    <ligand>
        <name>Zn(2+)</name>
        <dbReference type="ChEBI" id="CHEBI:29105"/>
    </ligand>
</feature>
<feature type="binding site" evidence="1">
    <location>
        <position position="238"/>
    </location>
    <ligand>
        <name>Zn(2+)</name>
        <dbReference type="ChEBI" id="CHEBI:29105"/>
    </ligand>
</feature>
<feature type="binding site" evidence="1">
    <location>
        <position position="242"/>
    </location>
    <ligand>
        <name>Zn(2+)</name>
        <dbReference type="ChEBI" id="CHEBI:29105"/>
    </ligand>
</feature>
<evidence type="ECO:0000255" key="1">
    <source>
        <dbReference type="HAMAP-Rule" id="MF_00388"/>
    </source>
</evidence>
<sequence>MIKQRTLKRIVQATGVGLHTGKKVTLTLRPAPANTGVIYRRTDLNPPVDFPADAKSVRDTMLCTCLVNEHDVRISTVEHLNAALAGLGIDNIVIEVNAPEIPIMDGSAAPFVYLLLDAGIDALNCAKKFVRIKETVRVEDGDKWAEFRPYNGFTLDFTIDFNHPAIDSSSQRYAMNFSADAFMRQISRARTFGFMRDIEYLQSRGLCLGGSFDCAIVVDDYRVLNEDGLRFEDEFVRHKMLDAIGDLFMCGHNIIGAFTAYKSGHALNNKLLQAVLAKQEAWEFVTFQDDAELPLAFKAPSTVLA</sequence>
<keyword id="KW-0378">Hydrolase</keyword>
<keyword id="KW-0441">Lipid A biosynthesis</keyword>
<keyword id="KW-0444">Lipid biosynthesis</keyword>
<keyword id="KW-0443">Lipid metabolism</keyword>
<keyword id="KW-0479">Metal-binding</keyword>
<keyword id="KW-0862">Zinc</keyword>
<dbReference type="EC" id="3.5.1.108" evidence="1"/>
<dbReference type="EMBL" id="AL513382">
    <property type="protein sequence ID" value="CAD01291.1"/>
    <property type="molecule type" value="Genomic_DNA"/>
</dbReference>
<dbReference type="EMBL" id="AE014613">
    <property type="protein sequence ID" value="AAO67870.1"/>
    <property type="molecule type" value="Genomic_DNA"/>
</dbReference>
<dbReference type="RefSeq" id="NP_454746.1">
    <property type="nucleotide sequence ID" value="NC_003198.1"/>
</dbReference>
<dbReference type="RefSeq" id="WP_000595474.1">
    <property type="nucleotide sequence ID" value="NZ_WSUR01000009.1"/>
</dbReference>
<dbReference type="SMR" id="Q8Z9G5"/>
<dbReference type="STRING" id="220341.gene:17584193"/>
<dbReference type="KEGG" id="stt:t0138"/>
<dbReference type="KEGG" id="sty:STY0154"/>
<dbReference type="PATRIC" id="fig|220341.7.peg.154"/>
<dbReference type="eggNOG" id="COG0774">
    <property type="taxonomic scope" value="Bacteria"/>
</dbReference>
<dbReference type="HOGENOM" id="CLU_046528_1_0_6"/>
<dbReference type="OMA" id="IVFYRSD"/>
<dbReference type="OrthoDB" id="9802746at2"/>
<dbReference type="UniPathway" id="UPA00359">
    <property type="reaction ID" value="UER00478"/>
</dbReference>
<dbReference type="Proteomes" id="UP000000541">
    <property type="component" value="Chromosome"/>
</dbReference>
<dbReference type="Proteomes" id="UP000002670">
    <property type="component" value="Chromosome"/>
</dbReference>
<dbReference type="GO" id="GO:0016020">
    <property type="term" value="C:membrane"/>
    <property type="evidence" value="ECO:0007669"/>
    <property type="project" value="GOC"/>
</dbReference>
<dbReference type="GO" id="GO:0046872">
    <property type="term" value="F:metal ion binding"/>
    <property type="evidence" value="ECO:0007669"/>
    <property type="project" value="UniProtKB-KW"/>
</dbReference>
<dbReference type="GO" id="GO:0103117">
    <property type="term" value="F:UDP-3-O-acyl-N-acetylglucosamine deacetylase activity"/>
    <property type="evidence" value="ECO:0007669"/>
    <property type="project" value="UniProtKB-UniRule"/>
</dbReference>
<dbReference type="GO" id="GO:0009245">
    <property type="term" value="P:lipid A biosynthetic process"/>
    <property type="evidence" value="ECO:0007669"/>
    <property type="project" value="UniProtKB-UniRule"/>
</dbReference>
<dbReference type="FunFam" id="3.30.1700.10:FF:000001">
    <property type="entry name" value="UDP-3-O-acyl-N-acetylglucosamine deacetylase"/>
    <property type="match status" value="1"/>
</dbReference>
<dbReference type="FunFam" id="3.30.230.20:FF:000001">
    <property type="entry name" value="UDP-3-O-acyl-N-acetylglucosamine deacetylase"/>
    <property type="match status" value="1"/>
</dbReference>
<dbReference type="Gene3D" id="3.30.230.20">
    <property type="entry name" value="lpxc deacetylase, domain 1"/>
    <property type="match status" value="1"/>
</dbReference>
<dbReference type="Gene3D" id="3.30.1700.10">
    <property type="entry name" value="lpxc deacetylase, domain 2"/>
    <property type="match status" value="1"/>
</dbReference>
<dbReference type="HAMAP" id="MF_00388">
    <property type="entry name" value="LpxC"/>
    <property type="match status" value="1"/>
</dbReference>
<dbReference type="InterPro" id="IPR020568">
    <property type="entry name" value="Ribosomal_Su5_D2-typ_SF"/>
</dbReference>
<dbReference type="InterPro" id="IPR004463">
    <property type="entry name" value="UDP-acyl_GlcNac_deAcase"/>
</dbReference>
<dbReference type="InterPro" id="IPR011334">
    <property type="entry name" value="UDP-acyl_GlcNac_deAcase_C"/>
</dbReference>
<dbReference type="InterPro" id="IPR015870">
    <property type="entry name" value="UDP-acyl_N-AcGlcN_deAcase_N"/>
</dbReference>
<dbReference type="NCBIfam" id="TIGR00325">
    <property type="entry name" value="lpxC"/>
    <property type="match status" value="1"/>
</dbReference>
<dbReference type="PANTHER" id="PTHR33694">
    <property type="entry name" value="UDP-3-O-ACYL-N-ACETYLGLUCOSAMINE DEACETYLASE 1, MITOCHONDRIAL-RELATED"/>
    <property type="match status" value="1"/>
</dbReference>
<dbReference type="PANTHER" id="PTHR33694:SF1">
    <property type="entry name" value="UDP-3-O-ACYL-N-ACETYLGLUCOSAMINE DEACETYLASE 1, MITOCHONDRIAL-RELATED"/>
    <property type="match status" value="1"/>
</dbReference>
<dbReference type="Pfam" id="PF03331">
    <property type="entry name" value="LpxC"/>
    <property type="match status" value="1"/>
</dbReference>
<dbReference type="SUPFAM" id="SSF54211">
    <property type="entry name" value="Ribosomal protein S5 domain 2-like"/>
    <property type="match status" value="2"/>
</dbReference>
<protein>
    <recommendedName>
        <fullName evidence="1">UDP-3-O-acyl-N-acetylglucosamine deacetylase</fullName>
        <shortName evidence="1">UDP-3-O-acyl-GlcNAc deacetylase</shortName>
        <ecNumber evidence="1">3.5.1.108</ecNumber>
    </recommendedName>
    <alternativeName>
        <fullName evidence="1">UDP-3-O-[R-3-hydroxymyristoyl]-N-acetylglucosamine deacetylase</fullName>
    </alternativeName>
</protein>
<organism>
    <name type="scientific">Salmonella typhi</name>
    <dbReference type="NCBI Taxonomy" id="90370"/>
    <lineage>
        <taxon>Bacteria</taxon>
        <taxon>Pseudomonadati</taxon>
        <taxon>Pseudomonadota</taxon>
        <taxon>Gammaproteobacteria</taxon>
        <taxon>Enterobacterales</taxon>
        <taxon>Enterobacteriaceae</taxon>
        <taxon>Salmonella</taxon>
    </lineage>
</organism>
<accession>Q8Z9G5</accession>